<organism>
    <name type="scientific">Caenorhabditis elegans</name>
    <dbReference type="NCBI Taxonomy" id="6239"/>
    <lineage>
        <taxon>Eukaryota</taxon>
        <taxon>Metazoa</taxon>
        <taxon>Ecdysozoa</taxon>
        <taxon>Nematoda</taxon>
        <taxon>Chromadorea</taxon>
        <taxon>Rhabditida</taxon>
        <taxon>Rhabditina</taxon>
        <taxon>Rhabditomorpha</taxon>
        <taxon>Rhabditoidea</taxon>
        <taxon>Rhabditidae</taxon>
        <taxon>Peloderinae</taxon>
        <taxon>Caenorhabditis</taxon>
    </lineage>
</organism>
<sequence>MSEKLPPGTLCAVCDDIATGKHYSVASCNGCKTFFRRALVNNREFVCQGNKDCPVNKGVRCACRYCRLQKCLAVGMDKNSIQNDRDRIGYTKRKRRHDDNDMEGGVHHSEHIRDGSSGSPQMNDESPESMDMKDIKIDLNCLDPIADRLTTLENNFTLLLSRCADLHSYATLEDALNAPSRFMQPISCEWSDNVVLTNRDDKLPFWRQRLIALYIDWAKTFSTFRSLPYADKVAMVTNHASSFMIMCEAFRTPEHMKSDVVRKRPDLPNIVTSNSGSGCSRVSSVAGSLVSNGEDVHDDLTNLLHAACIQQSINKGIMFGENSSDDKILLNLPIREIKKEPLEVPSTEGMIQLPTEYGNLPADYASWIPQDYGHPTAGHEGKSDMHNFFEARDFCVGRPSSCNLNERSMKTVSMLESRNFQSPSANNSSLSGITPVLTMMIDLVMKPFRQLNFSTTEFALLQAIMFFDPDTEGLDSASQRNVVAEQKKLLAVLFRHLQKAYNPQAASERYASIILRMPSIRRAAAKKNESLQVLDMLQMHEINSLVKETSLGPRPSNVQQRMGIGGGAGGCLTFPSQED</sequence>
<evidence type="ECO:0000255" key="1">
    <source>
        <dbReference type="PROSITE-ProRule" id="PRU00407"/>
    </source>
</evidence>
<evidence type="ECO:0000255" key="2">
    <source>
        <dbReference type="PROSITE-ProRule" id="PRU01189"/>
    </source>
</evidence>
<evidence type="ECO:0000256" key="3">
    <source>
        <dbReference type="SAM" id="MobiDB-lite"/>
    </source>
</evidence>
<evidence type="ECO:0000305" key="4"/>
<name>NHR47_CAEEL</name>
<accession>Q17370</accession>
<accession>O76382</accession>
<reference key="1">
    <citation type="submission" date="1995-11" db="EMBL/GenBank/DDBJ databases">
        <authorList>
            <person name="Winge P."/>
            <person name="Bones A."/>
            <person name="Goebel V."/>
            <person name="Fleming J.T."/>
        </authorList>
    </citation>
    <scope>NUCLEOTIDE SEQUENCE [MRNA]</scope>
    <source>
        <strain>Bristol N2</strain>
    </source>
</reference>
<reference key="2">
    <citation type="journal article" date="2005" name="J. Mol. Evol.">
        <title>Explosive lineage-specific expansion of the orphan nuclear receptor HNF4 in nematodes.</title>
        <authorList>
            <person name="Robinson-Rechavi M."/>
            <person name="Maina C.V."/>
            <person name="Gissendanner C.R."/>
            <person name="Laudet V."/>
            <person name="Sluder A."/>
        </authorList>
    </citation>
    <scope>NUCLEOTIDE SEQUENCE [MRNA]</scope>
</reference>
<reference key="3">
    <citation type="journal article" date="1998" name="Science">
        <title>Genome sequence of the nematode C. elegans: a platform for investigating biology.</title>
        <authorList>
            <consortium name="The C. elegans sequencing consortium"/>
        </authorList>
    </citation>
    <scope>NUCLEOTIDE SEQUENCE [LARGE SCALE GENOMIC DNA]</scope>
    <source>
        <strain>Bristol N2</strain>
    </source>
</reference>
<keyword id="KW-0238">DNA-binding</keyword>
<keyword id="KW-0479">Metal-binding</keyword>
<keyword id="KW-0539">Nucleus</keyword>
<keyword id="KW-0675">Receptor</keyword>
<keyword id="KW-1185">Reference proteome</keyword>
<keyword id="KW-0804">Transcription</keyword>
<keyword id="KW-0805">Transcription regulation</keyword>
<keyword id="KW-0862">Zinc</keyword>
<keyword id="KW-0863">Zinc-finger</keyword>
<proteinExistence type="evidence at protein level"/>
<dbReference type="EMBL" id="U41296">
    <property type="protein sequence ID" value="AAA93297.1"/>
    <property type="molecule type" value="mRNA"/>
</dbReference>
<dbReference type="EMBL" id="AY204170">
    <property type="protein sequence ID" value="AAO39174.1"/>
    <property type="molecule type" value="mRNA"/>
</dbReference>
<dbReference type="EMBL" id="FO080610">
    <property type="protein sequence ID" value="CCD65132.1"/>
    <property type="molecule type" value="Genomic_DNA"/>
</dbReference>
<dbReference type="PIR" id="G89050">
    <property type="entry name" value="G89050"/>
</dbReference>
<dbReference type="PIR" id="T33174">
    <property type="entry name" value="T33174"/>
</dbReference>
<dbReference type="RefSeq" id="NP_504455.1">
    <property type="nucleotide sequence ID" value="NM_072054.6"/>
</dbReference>
<dbReference type="BioGRID" id="43982">
    <property type="interactions" value="12"/>
</dbReference>
<dbReference type="FunCoup" id="Q17370">
    <property type="interactions" value="5"/>
</dbReference>
<dbReference type="IntAct" id="Q17370">
    <property type="interactions" value="11"/>
</dbReference>
<dbReference type="STRING" id="6239.C24G6.4.1"/>
<dbReference type="iPTMnet" id="Q17370"/>
<dbReference type="PaxDb" id="6239-C24G6.4"/>
<dbReference type="PeptideAtlas" id="Q17370"/>
<dbReference type="EnsemblMetazoa" id="C24G6.4.1">
    <property type="protein sequence ID" value="C24G6.4.1"/>
    <property type="gene ID" value="WBGene00003637"/>
</dbReference>
<dbReference type="GeneID" id="178933"/>
<dbReference type="KEGG" id="cel:CELE_C24G6.4"/>
<dbReference type="UCSC" id="F20D12.1a">
    <property type="organism name" value="c. elegans"/>
</dbReference>
<dbReference type="AGR" id="WB:WBGene00003637"/>
<dbReference type="CTD" id="178933"/>
<dbReference type="WormBase" id="C24G6.4">
    <property type="protein sequence ID" value="CE27727"/>
    <property type="gene ID" value="WBGene00003637"/>
    <property type="gene designation" value="nhr-47"/>
</dbReference>
<dbReference type="eggNOG" id="KOG3575">
    <property type="taxonomic scope" value="Eukaryota"/>
</dbReference>
<dbReference type="HOGENOM" id="CLU_457279_0_0_1"/>
<dbReference type="InParanoid" id="Q17370"/>
<dbReference type="OMA" id="TNHASSF"/>
<dbReference type="OrthoDB" id="10000397at2759"/>
<dbReference type="PhylomeDB" id="Q17370"/>
<dbReference type="Reactome" id="R-CEL-383280">
    <property type="pathway name" value="Nuclear Receptor transcription pathway"/>
</dbReference>
<dbReference type="SignaLink" id="Q17370"/>
<dbReference type="PRO" id="PR:Q17370"/>
<dbReference type="Proteomes" id="UP000001940">
    <property type="component" value="Chromosome V"/>
</dbReference>
<dbReference type="Bgee" id="WBGene00003637">
    <property type="expression patterns" value="Expressed in pharyngeal muscle cell (C elegans) and 3 other cell types or tissues"/>
</dbReference>
<dbReference type="GO" id="GO:0005634">
    <property type="term" value="C:nucleus"/>
    <property type="evidence" value="ECO:0007669"/>
    <property type="project" value="UniProtKB-SubCell"/>
</dbReference>
<dbReference type="GO" id="GO:0004879">
    <property type="term" value="F:nuclear receptor activity"/>
    <property type="evidence" value="ECO:0000318"/>
    <property type="project" value="GO_Central"/>
</dbReference>
<dbReference type="GO" id="GO:0000978">
    <property type="term" value="F:RNA polymerase II cis-regulatory region sequence-specific DNA binding"/>
    <property type="evidence" value="ECO:0000318"/>
    <property type="project" value="GO_Central"/>
</dbReference>
<dbReference type="GO" id="GO:0008270">
    <property type="term" value="F:zinc ion binding"/>
    <property type="evidence" value="ECO:0007669"/>
    <property type="project" value="UniProtKB-KW"/>
</dbReference>
<dbReference type="GO" id="GO:0030154">
    <property type="term" value="P:cell differentiation"/>
    <property type="evidence" value="ECO:0000318"/>
    <property type="project" value="GO_Central"/>
</dbReference>
<dbReference type="GO" id="GO:0006357">
    <property type="term" value="P:regulation of transcription by RNA polymerase II"/>
    <property type="evidence" value="ECO:0000318"/>
    <property type="project" value="GO_Central"/>
</dbReference>
<dbReference type="CDD" id="cd06960">
    <property type="entry name" value="NR_DBD_HNF4A"/>
    <property type="match status" value="1"/>
</dbReference>
<dbReference type="FunFam" id="3.30.50.10:FF:000030">
    <property type="entry name" value="Nuclear Hormone Receptor family"/>
    <property type="match status" value="1"/>
</dbReference>
<dbReference type="Gene3D" id="3.30.50.10">
    <property type="entry name" value="Erythroid Transcription Factor GATA-1, subunit A"/>
    <property type="match status" value="1"/>
</dbReference>
<dbReference type="Gene3D" id="1.10.565.10">
    <property type="entry name" value="Retinoid X Receptor"/>
    <property type="match status" value="1"/>
</dbReference>
<dbReference type="InterPro" id="IPR049636">
    <property type="entry name" value="HNF4-like_DBD"/>
</dbReference>
<dbReference type="InterPro" id="IPR035500">
    <property type="entry name" value="NHR-like_dom_sf"/>
</dbReference>
<dbReference type="InterPro" id="IPR000536">
    <property type="entry name" value="Nucl_hrmn_rcpt_lig-bd"/>
</dbReference>
<dbReference type="InterPro" id="IPR050274">
    <property type="entry name" value="Nuclear_hormone_rcpt_NR2"/>
</dbReference>
<dbReference type="InterPro" id="IPR001723">
    <property type="entry name" value="Nuclear_hrmn_rcpt"/>
</dbReference>
<dbReference type="InterPro" id="IPR001628">
    <property type="entry name" value="Znf_hrmn_rcpt"/>
</dbReference>
<dbReference type="InterPro" id="IPR013088">
    <property type="entry name" value="Znf_NHR/GATA"/>
</dbReference>
<dbReference type="PANTHER" id="PTHR24083">
    <property type="entry name" value="NUCLEAR HORMONE RECEPTOR"/>
    <property type="match status" value="1"/>
</dbReference>
<dbReference type="Pfam" id="PF00104">
    <property type="entry name" value="Hormone_recep"/>
    <property type="match status" value="2"/>
</dbReference>
<dbReference type="Pfam" id="PF00105">
    <property type="entry name" value="zf-C4"/>
    <property type="match status" value="1"/>
</dbReference>
<dbReference type="PRINTS" id="PR00398">
    <property type="entry name" value="STRDHORMONER"/>
</dbReference>
<dbReference type="PRINTS" id="PR00047">
    <property type="entry name" value="STROIDFINGER"/>
</dbReference>
<dbReference type="SMART" id="SM00430">
    <property type="entry name" value="HOLI"/>
    <property type="match status" value="1"/>
</dbReference>
<dbReference type="SMART" id="SM00399">
    <property type="entry name" value="ZnF_C4"/>
    <property type="match status" value="1"/>
</dbReference>
<dbReference type="SUPFAM" id="SSF57716">
    <property type="entry name" value="Glucocorticoid receptor-like (DNA-binding domain)"/>
    <property type="match status" value="1"/>
</dbReference>
<dbReference type="SUPFAM" id="SSF48508">
    <property type="entry name" value="Nuclear receptor ligand-binding domain"/>
    <property type="match status" value="1"/>
</dbReference>
<dbReference type="PROSITE" id="PS51843">
    <property type="entry name" value="NR_LBD"/>
    <property type="match status" value="1"/>
</dbReference>
<dbReference type="PROSITE" id="PS00031">
    <property type="entry name" value="NUCLEAR_REC_DBD_1"/>
    <property type="match status" value="1"/>
</dbReference>
<dbReference type="PROSITE" id="PS51030">
    <property type="entry name" value="NUCLEAR_REC_DBD_2"/>
    <property type="match status" value="1"/>
</dbReference>
<comment type="function">
    <text>Orphan nuclear receptor.</text>
</comment>
<comment type="interaction">
    <interactant intactId="EBI-2412077">
        <id>Q17370</id>
    </interactant>
    <interactant intactId="EBI-2412071">
        <id>Q17589</id>
        <label>nhr-17</label>
    </interactant>
    <organismsDiffer>false</organismsDiffer>
    <experiments>3</experiments>
</comment>
<comment type="subcellular location">
    <subcellularLocation>
        <location evidence="4">Nucleus</location>
    </subcellularLocation>
</comment>
<comment type="similarity">
    <text evidence="4">Belongs to the nuclear hormone receptor family.</text>
</comment>
<protein>
    <recommendedName>
        <fullName>Nuclear hormone receptor family member nhr-47</fullName>
    </recommendedName>
</protein>
<gene>
    <name type="primary">nhr-47</name>
    <name type="synonym">csr-1</name>
    <name type="ORF">C24G6.4</name>
</gene>
<feature type="chain" id="PRO_0000053783" description="Nuclear hormone receptor family member nhr-47">
    <location>
        <begin position="1"/>
        <end position="579"/>
    </location>
</feature>
<feature type="domain" description="NR LBD" evidence="2">
    <location>
        <begin position="164"/>
        <end position="553"/>
    </location>
</feature>
<feature type="DNA-binding region" description="Nuclear receptor" evidence="1">
    <location>
        <begin position="8"/>
        <end position="83"/>
    </location>
</feature>
<feature type="zinc finger region" description="NR C4-type" evidence="1">
    <location>
        <begin position="11"/>
        <end position="31"/>
    </location>
</feature>
<feature type="zinc finger region" description="NR C4-type" evidence="1">
    <location>
        <begin position="47"/>
        <end position="71"/>
    </location>
</feature>
<feature type="region of interest" description="Disordered" evidence="3">
    <location>
        <begin position="87"/>
        <end position="128"/>
    </location>
</feature>
<feature type="compositionally biased region" description="Basic and acidic residues" evidence="3">
    <location>
        <begin position="104"/>
        <end position="114"/>
    </location>
</feature>